<reference key="1">
    <citation type="journal article" date="2006" name="Gene">
        <title>Adaptive selection of mitochondrial complex I subunits during primate radiation.</title>
        <authorList>
            <person name="Mishmar D."/>
            <person name="Ruiz-Pesini E."/>
            <person name="Mondragon-Palomino M."/>
            <person name="Procaccio V."/>
            <person name="Gaut B."/>
            <person name="Wallace D.C."/>
        </authorList>
    </citation>
    <scope>NUCLEOTIDE SEQUENCE [MRNA]</scope>
</reference>
<accession>P0CB82</accession>
<accession>Q0MQB2</accession>
<accession>Q5R5S0</accession>
<sequence>MAAAAQSRVVRVLSMSRSAITAIATSVCHGPPRRQLHHALIPHGKGGRSSVSGIVATVFGATGFLGRYVVNHLGRMGSQVIIPYRCDTYDIMHLRPMGDLGQLLFLEWDARDKDSIRRVVQHSNVVINLIGRDWETRNFDFEDVFVKIPQAIAQLSKEAGVEKFIHVSHLNANIKSSSRYLRNKAVGEKVVRDAFPEAIIIKPSDIFGREDRFLNSFASMHRFGPTPLGSLGWKTVKQPVYVVDVSKGIVNAVKDPDANGKSFAFVGPNRYLLFHLVKYIFAVAHRLFLPFPLPLFAYRWVARVFEISPFEPWITRDKVERMHITDMKLPHLPGLEDLGIQATPLELKAIEVLRRHRTYRWLSAEIEDVKPAKTVNI</sequence>
<dbReference type="EMBL" id="DQ885722">
    <property type="protein sequence ID" value="ABH12231.1"/>
    <property type="status" value="ALT_INIT"/>
    <property type="molecule type" value="mRNA"/>
</dbReference>
<dbReference type="SMR" id="P0CB82"/>
<dbReference type="GO" id="GO:0005759">
    <property type="term" value="C:mitochondrial matrix"/>
    <property type="evidence" value="ECO:0007669"/>
    <property type="project" value="UniProtKB-SubCell"/>
</dbReference>
<dbReference type="GO" id="GO:0045271">
    <property type="term" value="C:respiratory chain complex I"/>
    <property type="evidence" value="ECO:0000250"/>
    <property type="project" value="UniProtKB"/>
</dbReference>
<dbReference type="GO" id="GO:0044877">
    <property type="term" value="F:protein-containing complex binding"/>
    <property type="evidence" value="ECO:0007669"/>
    <property type="project" value="TreeGrafter"/>
</dbReference>
<dbReference type="GO" id="GO:0007623">
    <property type="term" value="P:circadian rhythm"/>
    <property type="evidence" value="ECO:0000250"/>
    <property type="project" value="UniProtKB"/>
</dbReference>
<dbReference type="CDD" id="cd05271">
    <property type="entry name" value="NDUFA9_like_SDR_a"/>
    <property type="match status" value="1"/>
</dbReference>
<dbReference type="FunFam" id="3.40.50.720:FF:000246">
    <property type="entry name" value="NADH dehydrogenase [ubiquinone] 1 alpha subcomplex subunit 9, mitochondrial"/>
    <property type="match status" value="1"/>
</dbReference>
<dbReference type="Gene3D" id="3.40.50.720">
    <property type="entry name" value="NAD(P)-binding Rossmann-like Domain"/>
    <property type="match status" value="1"/>
</dbReference>
<dbReference type="InterPro" id="IPR051207">
    <property type="entry name" value="ComplexI_NDUFA9_subunit"/>
</dbReference>
<dbReference type="InterPro" id="IPR001509">
    <property type="entry name" value="Epimerase_deHydtase"/>
</dbReference>
<dbReference type="InterPro" id="IPR036291">
    <property type="entry name" value="NAD(P)-bd_dom_sf"/>
</dbReference>
<dbReference type="PANTHER" id="PTHR12126:SF10">
    <property type="entry name" value="NADH DEHYDROGENASE [UBIQUINONE] 1 ALPHA SUBCOMPLEX SUBUNIT 9, MITOCHONDRIAL"/>
    <property type="match status" value="1"/>
</dbReference>
<dbReference type="PANTHER" id="PTHR12126">
    <property type="entry name" value="NADH-UBIQUINONE OXIDOREDUCTASE 39 KDA SUBUNIT-RELATED"/>
    <property type="match status" value="1"/>
</dbReference>
<dbReference type="Pfam" id="PF01370">
    <property type="entry name" value="Epimerase"/>
    <property type="match status" value="1"/>
</dbReference>
<dbReference type="SUPFAM" id="SSF51735">
    <property type="entry name" value="NAD(P)-binding Rossmann-fold domains"/>
    <property type="match status" value="1"/>
</dbReference>
<protein>
    <recommendedName>
        <fullName>NADH dehydrogenase [ubiquinone] 1 alpha subcomplex subunit 9, mitochondrial</fullName>
    </recommendedName>
    <alternativeName>
        <fullName>Complex I-39kD</fullName>
        <shortName>CI-39kD</shortName>
    </alternativeName>
    <alternativeName>
        <fullName>NADH-ubiquinone oxidoreductase 39 kDa subunit</fullName>
    </alternativeName>
</protein>
<proteinExistence type="evidence at transcript level"/>
<gene>
    <name type="primary">NDUFA9</name>
</gene>
<keyword id="KW-0007">Acetylation</keyword>
<keyword id="KW-0249">Electron transport</keyword>
<keyword id="KW-0274">FAD</keyword>
<keyword id="KW-0285">Flavoprotein</keyword>
<keyword id="KW-0496">Mitochondrion</keyword>
<keyword id="KW-0679">Respiratory chain</keyword>
<keyword id="KW-0809">Transit peptide</keyword>
<keyword id="KW-0813">Transport</keyword>
<feature type="transit peptide" description="Mitochondrion" evidence="1">
    <location>
        <begin position="1"/>
        <end position="35"/>
    </location>
</feature>
<feature type="chain" id="PRO_0000389247" description="NADH dehydrogenase [ubiquinone] 1 alpha subcomplex subunit 9, mitochondrial">
    <location>
        <begin position="36"/>
        <end position="377"/>
    </location>
</feature>
<feature type="modified residue" description="N6-succinyllysine" evidence="4">
    <location>
        <position position="175"/>
    </location>
</feature>
<feature type="modified residue" description="N6-acetyllysine" evidence="4">
    <location>
        <position position="189"/>
    </location>
</feature>
<feature type="modified residue" description="N6-acetyllysine" evidence="4">
    <location>
        <position position="370"/>
    </location>
</feature>
<comment type="function">
    <text evidence="2">Accessory subunit of the mitochondrial membrane respiratory chain NADH dehydrogenase (Complex I), that is believed not to be involved in catalysis. Complex I functions in the transfer of electrons from NADH to the respiratory chain. The immediate electron acceptor for the enzyme is believed to be ubiquinone.</text>
</comment>
<comment type="cofactor">
    <cofactor evidence="1">
        <name>FAD</name>
        <dbReference type="ChEBI" id="CHEBI:57692"/>
    </cofactor>
    <text evidence="1">Binds 1 FAD per subunit.</text>
</comment>
<comment type="subunit">
    <text evidence="2 3">Complex I is composed of 45 different subunits (By similarity). This a component of the hydrophobic protein fraction (By similarity). Interacts with BLOC1S1 (By similarity). Interacts with SLC2A4 (By similarity). Interacts with CLOCK (By similarity). Interacts with RAB5IF (By similarity).</text>
</comment>
<comment type="subcellular location">
    <subcellularLocation>
        <location evidence="2">Mitochondrion matrix</location>
    </subcellularLocation>
</comment>
<comment type="PTM">
    <text evidence="2">Acetylated on lysine residues. BLOC1S1 is required for acetylation. Acetylated by CLOCK in a circadian manner.</text>
</comment>
<comment type="similarity">
    <text evidence="5">Belongs to the complex I NDUFA9 subunit family.</text>
</comment>
<comment type="sequence caution" evidence="5">
    <conflict type="erroneous initiation">
        <sequence resource="EMBL-CDS" id="ABH12231"/>
    </conflict>
</comment>
<evidence type="ECO:0000250" key="1"/>
<evidence type="ECO:0000250" key="2">
    <source>
        <dbReference type="UniProtKB" id="Q16795"/>
    </source>
</evidence>
<evidence type="ECO:0000250" key="3">
    <source>
        <dbReference type="UniProtKB" id="Q5BK63"/>
    </source>
</evidence>
<evidence type="ECO:0000250" key="4">
    <source>
        <dbReference type="UniProtKB" id="Q9DC69"/>
    </source>
</evidence>
<evidence type="ECO:0000305" key="5"/>
<organism>
    <name type="scientific">Pongo pygmaeus</name>
    <name type="common">Bornean orangutan</name>
    <dbReference type="NCBI Taxonomy" id="9600"/>
    <lineage>
        <taxon>Eukaryota</taxon>
        <taxon>Metazoa</taxon>
        <taxon>Chordata</taxon>
        <taxon>Craniata</taxon>
        <taxon>Vertebrata</taxon>
        <taxon>Euteleostomi</taxon>
        <taxon>Mammalia</taxon>
        <taxon>Eutheria</taxon>
        <taxon>Euarchontoglires</taxon>
        <taxon>Primates</taxon>
        <taxon>Haplorrhini</taxon>
        <taxon>Catarrhini</taxon>
        <taxon>Hominidae</taxon>
        <taxon>Pongo</taxon>
    </lineage>
</organism>
<name>NDUA9_PONPY</name>